<feature type="chain" id="PRO_1000148265" description="Phosphoribosylformylglycinamidine cyclo-ligase">
    <location>
        <begin position="1"/>
        <end position="346"/>
    </location>
</feature>
<gene>
    <name evidence="1" type="primary">purM</name>
    <name type="ordered locus">BAMEG_0354</name>
</gene>
<sequence length="346" mass="37256">MANAYKQAGVDIEAGYEAVSRMKKHVQTTMRKEVLGGLGGFGGMFDLSKFALEEPVLVSGTDGVGTKLMLAFMADKHDTIGIDAVAMCVNDIVVQGAEPLFFLDYIACGKAEPSKIENIVKGISEGCRQAGCALIGGETAEMPGMYSTEEYDLAGFTVGIVDKKKIVTGEKIEAGHVLIGLASSGIHSNGYSLVRKVLLEDGELSLDRIYGRLELPLGEELLKPTKIYVKPILELLKNHEVYGMAHITGGGFIENIPRMLPEGIGAEIELGSWKIQPIFSLLQEVGKLEEKEMFNIFNMGIGMVVAVKEEDAKDIVRLLEEQGETARIIGRTVQGAGVTFNGGKAL</sequence>
<dbReference type="EC" id="6.3.3.1" evidence="1"/>
<dbReference type="EMBL" id="CP001215">
    <property type="protein sequence ID" value="ACP13155.1"/>
    <property type="molecule type" value="Genomic_DNA"/>
</dbReference>
<dbReference type="RefSeq" id="WP_001262436.1">
    <property type="nucleotide sequence ID" value="NC_012581.1"/>
</dbReference>
<dbReference type="SMR" id="C3L534"/>
<dbReference type="GeneID" id="45020355"/>
<dbReference type="KEGG" id="bah:BAMEG_0354"/>
<dbReference type="HOGENOM" id="CLU_047116_0_0_9"/>
<dbReference type="UniPathway" id="UPA00074">
    <property type="reaction ID" value="UER00129"/>
</dbReference>
<dbReference type="GO" id="GO:0005829">
    <property type="term" value="C:cytosol"/>
    <property type="evidence" value="ECO:0007669"/>
    <property type="project" value="TreeGrafter"/>
</dbReference>
<dbReference type="GO" id="GO:0005524">
    <property type="term" value="F:ATP binding"/>
    <property type="evidence" value="ECO:0007669"/>
    <property type="project" value="UniProtKB-KW"/>
</dbReference>
<dbReference type="GO" id="GO:0004637">
    <property type="term" value="F:phosphoribosylamine-glycine ligase activity"/>
    <property type="evidence" value="ECO:0007669"/>
    <property type="project" value="TreeGrafter"/>
</dbReference>
<dbReference type="GO" id="GO:0004641">
    <property type="term" value="F:phosphoribosylformylglycinamidine cyclo-ligase activity"/>
    <property type="evidence" value="ECO:0007669"/>
    <property type="project" value="UniProtKB-UniRule"/>
</dbReference>
<dbReference type="GO" id="GO:0006189">
    <property type="term" value="P:'de novo' IMP biosynthetic process"/>
    <property type="evidence" value="ECO:0007669"/>
    <property type="project" value="UniProtKB-UniRule"/>
</dbReference>
<dbReference type="GO" id="GO:0046084">
    <property type="term" value="P:adenine biosynthetic process"/>
    <property type="evidence" value="ECO:0007669"/>
    <property type="project" value="TreeGrafter"/>
</dbReference>
<dbReference type="CDD" id="cd02196">
    <property type="entry name" value="PurM"/>
    <property type="match status" value="1"/>
</dbReference>
<dbReference type="FunFam" id="3.30.1330.10:FF:000001">
    <property type="entry name" value="Phosphoribosylformylglycinamidine cyclo-ligase"/>
    <property type="match status" value="1"/>
</dbReference>
<dbReference type="FunFam" id="3.90.650.10:FF:000001">
    <property type="entry name" value="Phosphoribosylformylglycinamidine cyclo-ligase"/>
    <property type="match status" value="1"/>
</dbReference>
<dbReference type="Gene3D" id="3.90.650.10">
    <property type="entry name" value="PurM-like C-terminal domain"/>
    <property type="match status" value="1"/>
</dbReference>
<dbReference type="Gene3D" id="3.30.1330.10">
    <property type="entry name" value="PurM-like, N-terminal domain"/>
    <property type="match status" value="1"/>
</dbReference>
<dbReference type="HAMAP" id="MF_00741">
    <property type="entry name" value="AIRS"/>
    <property type="match status" value="1"/>
</dbReference>
<dbReference type="InterPro" id="IPR010918">
    <property type="entry name" value="PurM-like_C_dom"/>
</dbReference>
<dbReference type="InterPro" id="IPR036676">
    <property type="entry name" value="PurM-like_C_sf"/>
</dbReference>
<dbReference type="InterPro" id="IPR016188">
    <property type="entry name" value="PurM-like_N"/>
</dbReference>
<dbReference type="InterPro" id="IPR036921">
    <property type="entry name" value="PurM-like_N_sf"/>
</dbReference>
<dbReference type="InterPro" id="IPR004733">
    <property type="entry name" value="PurM_cligase"/>
</dbReference>
<dbReference type="NCBIfam" id="TIGR00878">
    <property type="entry name" value="purM"/>
    <property type="match status" value="1"/>
</dbReference>
<dbReference type="PANTHER" id="PTHR10520:SF12">
    <property type="entry name" value="TRIFUNCTIONAL PURINE BIOSYNTHETIC PROTEIN ADENOSINE-3"/>
    <property type="match status" value="1"/>
</dbReference>
<dbReference type="PANTHER" id="PTHR10520">
    <property type="entry name" value="TRIFUNCTIONAL PURINE BIOSYNTHETIC PROTEIN ADENOSINE-3-RELATED"/>
    <property type="match status" value="1"/>
</dbReference>
<dbReference type="Pfam" id="PF00586">
    <property type="entry name" value="AIRS"/>
    <property type="match status" value="1"/>
</dbReference>
<dbReference type="Pfam" id="PF02769">
    <property type="entry name" value="AIRS_C"/>
    <property type="match status" value="1"/>
</dbReference>
<dbReference type="SUPFAM" id="SSF56042">
    <property type="entry name" value="PurM C-terminal domain-like"/>
    <property type="match status" value="1"/>
</dbReference>
<dbReference type="SUPFAM" id="SSF55326">
    <property type="entry name" value="PurM N-terminal domain-like"/>
    <property type="match status" value="1"/>
</dbReference>
<name>PUR5_BACAC</name>
<evidence type="ECO:0000255" key="1">
    <source>
        <dbReference type="HAMAP-Rule" id="MF_00741"/>
    </source>
</evidence>
<reference key="1">
    <citation type="submission" date="2008-10" db="EMBL/GenBank/DDBJ databases">
        <title>Genome sequence of Bacillus anthracis str. CDC 684.</title>
        <authorList>
            <person name="Dodson R.J."/>
            <person name="Munk A.C."/>
            <person name="Brettin T."/>
            <person name="Bruce D."/>
            <person name="Detter C."/>
            <person name="Tapia R."/>
            <person name="Han C."/>
            <person name="Sutton G."/>
            <person name="Sims D."/>
        </authorList>
    </citation>
    <scope>NUCLEOTIDE SEQUENCE [LARGE SCALE GENOMIC DNA]</scope>
    <source>
        <strain>CDC 684 / NRRL 3495</strain>
    </source>
</reference>
<keyword id="KW-0067">ATP-binding</keyword>
<keyword id="KW-0963">Cytoplasm</keyword>
<keyword id="KW-0436">Ligase</keyword>
<keyword id="KW-0547">Nucleotide-binding</keyword>
<keyword id="KW-0658">Purine biosynthesis</keyword>
<accession>C3L534</accession>
<organism>
    <name type="scientific">Bacillus anthracis (strain CDC 684 / NRRL 3495)</name>
    <dbReference type="NCBI Taxonomy" id="568206"/>
    <lineage>
        <taxon>Bacteria</taxon>
        <taxon>Bacillati</taxon>
        <taxon>Bacillota</taxon>
        <taxon>Bacilli</taxon>
        <taxon>Bacillales</taxon>
        <taxon>Bacillaceae</taxon>
        <taxon>Bacillus</taxon>
        <taxon>Bacillus cereus group</taxon>
    </lineage>
</organism>
<proteinExistence type="inferred from homology"/>
<protein>
    <recommendedName>
        <fullName evidence="1">Phosphoribosylformylglycinamidine cyclo-ligase</fullName>
        <ecNumber evidence="1">6.3.3.1</ecNumber>
    </recommendedName>
    <alternativeName>
        <fullName evidence="1">AIR synthase</fullName>
    </alternativeName>
    <alternativeName>
        <fullName evidence="1">AIRS</fullName>
    </alternativeName>
    <alternativeName>
        <fullName evidence="1">Phosphoribosyl-aminoimidazole synthetase</fullName>
    </alternativeName>
</protein>
<comment type="catalytic activity">
    <reaction evidence="1">
        <text>2-formamido-N(1)-(5-O-phospho-beta-D-ribosyl)acetamidine + ATP = 5-amino-1-(5-phospho-beta-D-ribosyl)imidazole + ADP + phosphate + H(+)</text>
        <dbReference type="Rhea" id="RHEA:23032"/>
        <dbReference type="ChEBI" id="CHEBI:15378"/>
        <dbReference type="ChEBI" id="CHEBI:30616"/>
        <dbReference type="ChEBI" id="CHEBI:43474"/>
        <dbReference type="ChEBI" id="CHEBI:137981"/>
        <dbReference type="ChEBI" id="CHEBI:147287"/>
        <dbReference type="ChEBI" id="CHEBI:456216"/>
        <dbReference type="EC" id="6.3.3.1"/>
    </reaction>
</comment>
<comment type="pathway">
    <text evidence="1">Purine metabolism; IMP biosynthesis via de novo pathway; 5-amino-1-(5-phospho-D-ribosyl)imidazole from N(2)-formyl-N(1)-(5-phospho-D-ribosyl)glycinamide: step 2/2.</text>
</comment>
<comment type="subcellular location">
    <subcellularLocation>
        <location evidence="1">Cytoplasm</location>
    </subcellularLocation>
</comment>
<comment type="similarity">
    <text evidence="1">Belongs to the AIR synthase family.</text>
</comment>